<comment type="function">
    <text evidence="5">The recombinant protein has gelatinase activity. In vivo, injection of this recombinant into fifth instar L.oleracea (host) larvae results in partial insect mortality associated with the molt to sixth instar, with surviving insects showing retarded development and growth.</text>
</comment>
<comment type="cofactor">
    <cofactor evidence="1">
        <name>Zn(2+)</name>
        <dbReference type="ChEBI" id="CHEBI:29105"/>
    </cofactor>
    <text evidence="1">Binds 1 zinc ion per subunit.</text>
</comment>
<comment type="activity regulation">
    <text evidence="5">The gelatinase activity is inhibited by EDTA.</text>
</comment>
<comment type="subunit">
    <text evidence="1">Monomer.</text>
</comment>
<comment type="subcellular location">
    <subcellularLocation>
        <location evidence="1">Secreted</location>
    </subcellularLocation>
</comment>
<comment type="tissue specificity">
    <text evidence="5">Expressed by the venom gland.</text>
</comment>
<comment type="domain">
    <text evidence="5">The N-terminal section (alone) shows no toxic effect when injected into the host. This section may function in stabilizing the catalytic part of the protein, or in directing it to specific target sites of action (PubMed:19320760).</text>
</comment>
<comment type="similarity">
    <text evidence="6">In the C-terminal section; belongs to the venom metalloproteinase (M12B) family.</text>
</comment>
<sequence>QYSESQESGHNRNAPDKELTTEEFQLIFHQSQTVDIEYDFINITTEMIETERKVSFTIDGKEYHLSLTPAASQSVLPYGTKIKSAIWWTDNDTHIHEEDYSDERWDSRAIYENLEIMATILVRTENGTSYYDGVFGEGIAMKVVRSLPGRLMNIYGANYHFVYDSNGSVYDVVLNGQDEPAVPADMAVNNFYPKLLVLVDYSLFKIFNENFEETVKYLTIFWNAVNLRFRPVQHPKVNIIITGIVIAKNEAAFQHVYRARYSKNSKLVHTGRVIDNGRYFFGTNFDPYYDNYDASFTMASMDDPTGKGGATVIGGICSSSNNIAYIRDVGSYSGVKVATHELGHLLNGQHDSDTTCSEKINDNIYTIMAKQGSTKASKFVWSSCTLTAFANFSKTTSAACLKDTYRK</sequence>
<accession>B5AJT4</accession>
<protein>
    <recommendedName>
        <fullName>Venom metalloproteinase 3</fullName>
        <shortName>EpMP3</shortName>
    </recommendedName>
</protein>
<reference key="1">
    <citation type="journal article" date="2009" name="Insect Mol. Biol.">
        <title>A venom metalloproteinase from the parasitic wasp Eulophus pennicornis is toxic towards its host, tomato moth (Lacanobia oleracae).</title>
        <authorList>
            <person name="Price D.R."/>
            <person name="Bell H.A."/>
            <person name="Hinchliffe G."/>
            <person name="Fitches E."/>
            <person name="Weaver R."/>
            <person name="Gatehouse J.A."/>
        </authorList>
    </citation>
    <scope>NUCLEOTIDE SEQUENCE [MRNA]</scope>
    <scope>FUNCTION</scope>
    <scope>BIOASSAY</scope>
    <scope>ACTIVITY REGULATION</scope>
    <scope>TISSUE SPECIFICITY</scope>
</reference>
<organism>
    <name type="scientific">Eulophus pennicornis</name>
    <name type="common">Parasitoid wasp</name>
    <dbReference type="NCBI Taxonomy" id="108749"/>
    <lineage>
        <taxon>Eukaryota</taxon>
        <taxon>Metazoa</taxon>
        <taxon>Ecdysozoa</taxon>
        <taxon>Arthropoda</taxon>
        <taxon>Hexapoda</taxon>
        <taxon>Insecta</taxon>
        <taxon>Pterygota</taxon>
        <taxon>Neoptera</taxon>
        <taxon>Endopterygota</taxon>
        <taxon>Hymenoptera</taxon>
        <taxon>Apocrita</taxon>
        <taxon>Proctotrupomorpha</taxon>
        <taxon>Chalcidoidea</taxon>
        <taxon>Eulophidae</taxon>
        <taxon>Eulophinae</taxon>
        <taxon>Eulophus</taxon>
    </lineage>
</organism>
<dbReference type="EMBL" id="EU853179">
    <property type="protein sequence ID" value="ACF60599.1"/>
    <property type="molecule type" value="mRNA"/>
</dbReference>
<dbReference type="SMR" id="B5AJT4"/>
<dbReference type="GO" id="GO:0005576">
    <property type="term" value="C:extracellular region"/>
    <property type="evidence" value="ECO:0007669"/>
    <property type="project" value="UniProtKB-SubCell"/>
</dbReference>
<dbReference type="GO" id="GO:0046872">
    <property type="term" value="F:metal ion binding"/>
    <property type="evidence" value="ECO:0007669"/>
    <property type="project" value="UniProtKB-KW"/>
</dbReference>
<dbReference type="GO" id="GO:0004222">
    <property type="term" value="F:metalloendopeptidase activity"/>
    <property type="evidence" value="ECO:0007669"/>
    <property type="project" value="InterPro"/>
</dbReference>
<dbReference type="GO" id="GO:0090729">
    <property type="term" value="F:toxin activity"/>
    <property type="evidence" value="ECO:0007669"/>
    <property type="project" value="UniProtKB-KW"/>
</dbReference>
<dbReference type="GO" id="GO:0006509">
    <property type="term" value="P:membrane protein ectodomain proteolysis"/>
    <property type="evidence" value="ECO:0007669"/>
    <property type="project" value="TreeGrafter"/>
</dbReference>
<dbReference type="Gene3D" id="3.40.390.10">
    <property type="entry name" value="Collagenase (Catalytic Domain)"/>
    <property type="match status" value="1"/>
</dbReference>
<dbReference type="InterPro" id="IPR024079">
    <property type="entry name" value="MetalloPept_cat_dom_sf"/>
</dbReference>
<dbReference type="InterPro" id="IPR001590">
    <property type="entry name" value="Peptidase_M12B"/>
</dbReference>
<dbReference type="PANTHER" id="PTHR11905">
    <property type="entry name" value="ADAM A DISINTEGRIN AND METALLOPROTEASE DOMAIN"/>
    <property type="match status" value="1"/>
</dbReference>
<dbReference type="PANTHER" id="PTHR11905:SF249">
    <property type="entry name" value="SOL NARAE, ISOFORM C"/>
    <property type="match status" value="1"/>
</dbReference>
<dbReference type="Pfam" id="PF13688">
    <property type="entry name" value="Reprolysin_5"/>
    <property type="match status" value="1"/>
</dbReference>
<dbReference type="SUPFAM" id="SSF55486">
    <property type="entry name" value="Metalloproteases ('zincins'), catalytic domain"/>
    <property type="match status" value="1"/>
</dbReference>
<dbReference type="PROSITE" id="PS50215">
    <property type="entry name" value="ADAM_MEPRO"/>
    <property type="match status" value="1"/>
</dbReference>
<dbReference type="PROSITE" id="PS00142">
    <property type="entry name" value="ZINC_PROTEASE"/>
    <property type="match status" value="1"/>
</dbReference>
<keyword id="KW-1015">Disulfide bond</keyword>
<keyword id="KW-0325">Glycoprotein</keyword>
<keyword id="KW-0378">Hydrolase</keyword>
<keyword id="KW-0479">Metal-binding</keyword>
<keyword id="KW-0482">Metalloprotease</keyword>
<keyword id="KW-0645">Protease</keyword>
<keyword id="KW-0964">Secreted</keyword>
<keyword id="KW-0800">Toxin</keyword>
<keyword id="KW-0862">Zinc</keyword>
<name>VMP03_EULPE</name>
<proteinExistence type="evidence at transcript level"/>
<feature type="chain" id="PRO_0000423028" description="Venom metalloproteinase 3">
    <location>
        <begin position="1"/>
        <end position="407"/>
    </location>
</feature>
<feature type="domain" description="Peptidase M12B" evidence="3">
    <location>
        <begin position="191"/>
        <end position="405"/>
    </location>
</feature>
<feature type="active site" evidence="3 4">
    <location>
        <position position="341"/>
    </location>
</feature>
<feature type="binding site" evidence="1">
    <location>
        <position position="340"/>
    </location>
    <ligand>
        <name>Zn(2+)</name>
        <dbReference type="ChEBI" id="CHEBI:29105"/>
        <note>catalytic</note>
    </ligand>
</feature>
<feature type="binding site" evidence="1">
    <location>
        <position position="344"/>
    </location>
    <ligand>
        <name>Zn(2+)</name>
        <dbReference type="ChEBI" id="CHEBI:29105"/>
        <note>catalytic</note>
    </ligand>
</feature>
<feature type="binding site" evidence="1">
    <location>
        <position position="350"/>
    </location>
    <ligand>
        <name>Zn(2+)</name>
        <dbReference type="ChEBI" id="CHEBI:29105"/>
        <note>catalytic</note>
    </ligand>
</feature>
<feature type="glycosylation site" description="N-linked (GlcNAc...) asparagine" evidence="2">
    <location>
        <position position="42"/>
    </location>
</feature>
<feature type="glycosylation site" description="N-linked (GlcNAc...) asparagine" evidence="2">
    <location>
        <position position="91"/>
    </location>
</feature>
<feature type="glycosylation site" description="N-linked (GlcNAc...) asparagine" evidence="2">
    <location>
        <position position="126"/>
    </location>
</feature>
<feature type="glycosylation site" description="N-linked (GlcNAc...) asparagine" evidence="2">
    <location>
        <position position="166"/>
    </location>
</feature>
<feature type="glycosylation site" description="N-linked (GlcNAc...) asparagine" evidence="2">
    <location>
        <position position="391"/>
    </location>
</feature>
<feature type="disulfide bond" evidence="3">
    <location>
        <begin position="317"/>
        <end position="400"/>
    </location>
</feature>
<feature type="disulfide bond" evidence="3">
    <location>
        <begin position="356"/>
        <end position="384"/>
    </location>
</feature>
<evidence type="ECO:0000250" key="1"/>
<evidence type="ECO:0000255" key="2"/>
<evidence type="ECO:0000255" key="3">
    <source>
        <dbReference type="PROSITE-ProRule" id="PRU00276"/>
    </source>
</evidence>
<evidence type="ECO:0000255" key="4">
    <source>
        <dbReference type="PROSITE-ProRule" id="PRU10095"/>
    </source>
</evidence>
<evidence type="ECO:0000269" key="5">
    <source>
    </source>
</evidence>
<evidence type="ECO:0000305" key="6"/>